<feature type="chain" id="PRO_0000456910" description="Flavonoid 7-O-methyltransferase 1A">
    <location>
        <begin position="1"/>
        <end position="344"/>
    </location>
</feature>
<feature type="active site" description="Proton acceptor" evidence="2">
    <location>
        <position position="249"/>
    </location>
</feature>
<feature type="binding site" evidence="2">
    <location>
        <position position="211"/>
    </location>
    <ligand>
        <name>S-adenosyl-L-methionine</name>
        <dbReference type="ChEBI" id="CHEBI:59789"/>
    </ligand>
</feature>
<reference key="1">
    <citation type="journal article" date="2004" name="Phytochemistry">
        <title>Bio-fermentation of modified flavonoids: an example of in vivo diversification of secondary metabolites.</title>
        <authorList>
            <person name="Willits M.G."/>
            <person name="Giovanni M."/>
            <person name="Prata R.T.N."/>
            <person name="Kramer C.M."/>
            <person name="De Luca V."/>
            <person name="Steffens J.C."/>
            <person name="Graser G."/>
        </authorList>
    </citation>
    <scope>NUCLEOTIDE SEQUENCE [MRNA]</scope>
    <scope>FUNCTION</scope>
    <scope>CATALYTIC ACTIVITY</scope>
    <source>
        <tissue>Leaf</tissue>
    </source>
</reference>
<reference key="2">
    <citation type="journal article" date="2019" name="Nat. Prod. Rep.">
        <title>Non-volatile natural products in plant glandular trichomes: chemistry, biological activities and biosynthesis.</title>
        <authorList>
            <person name="Liu Y."/>
            <person name="Jing S.-X."/>
            <person name="Luo S.-H."/>
            <person name="Li S.-H."/>
        </authorList>
    </citation>
    <scope>PATHWAY</scope>
    <scope>REVIEW</scope>
</reference>
<dbReference type="EC" id="2.1.1.-" evidence="2 3"/>
<dbReference type="EC" id="2.1.1.232" evidence="3"/>
<dbReference type="EMBL" id="AY337457">
    <property type="protein sequence ID" value="AAR09598.1"/>
    <property type="molecule type" value="mRNA"/>
</dbReference>
<dbReference type="SMR" id="Q6VMW2"/>
<dbReference type="GO" id="GO:0008171">
    <property type="term" value="F:O-methyltransferase activity"/>
    <property type="evidence" value="ECO:0007669"/>
    <property type="project" value="InterPro"/>
</dbReference>
<dbReference type="GO" id="GO:0046983">
    <property type="term" value="F:protein dimerization activity"/>
    <property type="evidence" value="ECO:0007669"/>
    <property type="project" value="InterPro"/>
</dbReference>
<dbReference type="GO" id="GO:0032259">
    <property type="term" value="P:methylation"/>
    <property type="evidence" value="ECO:0007669"/>
    <property type="project" value="UniProtKB-KW"/>
</dbReference>
<dbReference type="Gene3D" id="3.40.50.150">
    <property type="entry name" value="Vaccinia Virus protein VP39"/>
    <property type="match status" value="1"/>
</dbReference>
<dbReference type="Gene3D" id="1.10.10.10">
    <property type="entry name" value="Winged helix-like DNA-binding domain superfamily/Winged helix DNA-binding domain"/>
    <property type="match status" value="1"/>
</dbReference>
<dbReference type="InterPro" id="IPR016461">
    <property type="entry name" value="COMT-like"/>
</dbReference>
<dbReference type="InterPro" id="IPR001077">
    <property type="entry name" value="O_MeTrfase_dom"/>
</dbReference>
<dbReference type="InterPro" id="IPR012967">
    <property type="entry name" value="Plant_O-MeTrfase_dimerisation"/>
</dbReference>
<dbReference type="InterPro" id="IPR029063">
    <property type="entry name" value="SAM-dependent_MTases_sf"/>
</dbReference>
<dbReference type="InterPro" id="IPR036388">
    <property type="entry name" value="WH-like_DNA-bd_sf"/>
</dbReference>
<dbReference type="InterPro" id="IPR036390">
    <property type="entry name" value="WH_DNA-bd_sf"/>
</dbReference>
<dbReference type="PANTHER" id="PTHR11746">
    <property type="entry name" value="O-METHYLTRANSFERASE"/>
    <property type="match status" value="1"/>
</dbReference>
<dbReference type="Pfam" id="PF08100">
    <property type="entry name" value="Dimerisation"/>
    <property type="match status" value="1"/>
</dbReference>
<dbReference type="Pfam" id="PF00891">
    <property type="entry name" value="Methyltransf_2"/>
    <property type="match status" value="1"/>
</dbReference>
<dbReference type="PIRSF" id="PIRSF005739">
    <property type="entry name" value="O-mtase"/>
    <property type="match status" value="1"/>
</dbReference>
<dbReference type="SUPFAM" id="SSF53335">
    <property type="entry name" value="S-adenosyl-L-methionine-dependent methyltransferases"/>
    <property type="match status" value="1"/>
</dbReference>
<dbReference type="SUPFAM" id="SSF46785">
    <property type="entry name" value="Winged helix' DNA-binding domain"/>
    <property type="match status" value="1"/>
</dbReference>
<dbReference type="PROSITE" id="PS51683">
    <property type="entry name" value="SAM_OMT_II"/>
    <property type="match status" value="1"/>
</dbReference>
<organism>
    <name type="scientific">Mentha piperita</name>
    <name type="common">Peppermint</name>
    <name type="synonym">Mentha aquatica x Mentha spicata</name>
    <dbReference type="NCBI Taxonomy" id="34256"/>
    <lineage>
        <taxon>Eukaryota</taxon>
        <taxon>Viridiplantae</taxon>
        <taxon>Streptophyta</taxon>
        <taxon>Embryophyta</taxon>
        <taxon>Tracheophyta</taxon>
        <taxon>Spermatophyta</taxon>
        <taxon>Magnoliopsida</taxon>
        <taxon>eudicotyledons</taxon>
        <taxon>Gunneridae</taxon>
        <taxon>Pentapetalae</taxon>
        <taxon>asterids</taxon>
        <taxon>lamiids</taxon>
        <taxon>Lamiales</taxon>
        <taxon>Lamiaceae</taxon>
        <taxon>Nepetoideae</taxon>
        <taxon>Mentheae</taxon>
        <taxon>Menthinae</taxon>
        <taxon>Mentha</taxon>
    </lineage>
</organism>
<proteinExistence type="evidence at protein level"/>
<protein>
    <recommendedName>
        <fullName evidence="4">Flavonoid 7-O-methyltransferase 1A</fullName>
        <shortName evidence="4">MpOMT1A</shortName>
        <ecNumber evidence="2 3">2.1.1.-</ecNumber>
    </recommendedName>
    <alternativeName>
        <fullName evidence="6">7,8,4'-trihydroxy-flavone 7-O-methyltransferase</fullName>
        <ecNumber evidence="3">2.1.1.-</ecNumber>
    </alternativeName>
    <alternativeName>
        <fullName evidence="6">Apigenin 7-O-methyltransferase</fullName>
        <ecNumber evidence="3">2.1.1.-</ecNumber>
    </alternativeName>
    <alternativeName>
        <fullName evidence="6">Isorhamnetin 7-O-methyltransferase</fullName>
        <ecNumber evidence="3">2.1.1.-</ecNumber>
    </alternativeName>
    <alternativeName>
        <fullName evidence="6">Kaempferol 7-O-methyltransferase</fullName>
        <ecNumber evidence="3">2.1.1.-</ecNumber>
    </alternativeName>
    <alternativeName>
        <fullName evidence="6">Luteolin 7-O-methyltransferase</fullName>
        <ecNumber evidence="3">2.1.1.-</ecNumber>
    </alternativeName>
    <alternativeName>
        <fullName evidence="6">Naringenin 7-O-methyltransferase</fullName>
        <ecNumber evidence="3">2.1.1.232</ecNumber>
    </alternativeName>
    <alternativeName>
        <fullName evidence="6">Quercetin 7-O-methyltransferase</fullName>
        <ecNumber evidence="3">2.1.1.-</ecNumber>
    </alternativeName>
    <alternativeName>
        <fullName evidence="6">Scutellarein 7-O-methyltransferase</fullName>
        <ecNumber evidence="3">2.1.1.-</ecNumber>
    </alternativeName>
</protein>
<evidence type="ECO:0000250" key="1">
    <source>
        <dbReference type="UniProtKB" id="Q7XB10"/>
    </source>
</evidence>
<evidence type="ECO:0000255" key="2">
    <source>
        <dbReference type="PROSITE-ProRule" id="PRU01020"/>
    </source>
</evidence>
<evidence type="ECO:0000269" key="3">
    <source>
    </source>
</evidence>
<evidence type="ECO:0000303" key="4">
    <source>
    </source>
</evidence>
<evidence type="ECO:0000303" key="5">
    <source>
    </source>
</evidence>
<evidence type="ECO:0000305" key="6">
    <source>
    </source>
</evidence>
<accession>Q6VMW2</accession>
<name>OMT1A_MENPI</name>
<keyword id="KW-0489">Methyltransferase</keyword>
<keyword id="KW-0949">S-adenosyl-L-methionine</keyword>
<keyword id="KW-0808">Transferase</keyword>
<gene>
    <name evidence="4" type="primary">OMT1A</name>
</gene>
<comment type="function">
    <text evidence="3">Flavonoid 7-O-methyltransferase involved in the biosynthesis of polymethoxylated flavonoids natural products such as pebrellin, aroma compounds which contribute to the flavor of peppermint, and exhibit pharmacological activities such as anti-allergic, anti-oxidant, antibacterial, anti-proliferative, and anti-inflammatory effects (PubMed:14697269). Catalyzes S-adenosylmethionine-dependent regioselective 7-O-methylation of flavonoids; active on various hydroxylated flavonoid substrates, including luteolin (LUT), quercetin, kaempferol, isorhamnetin, apigenin (API), scutellarein (6-hydroxy-apigenin, 6-OH-API, SCU), 7,8,4'-trihydroxy-flavone and naringenin (NAR), and, with a lower efficiency, 7,8,3',4'-tetrahydroxy-flavone, taxifolin, hesperetin and genistein (PubMed:14697269).</text>
</comment>
<comment type="catalytic activity">
    <reaction evidence="3">
        <text>apigenin + S-adenosyl-L-methionine = genkwanin + S-adenosyl-L-homocysteine + H(+)</text>
        <dbReference type="Rhea" id="RHEA:73071"/>
        <dbReference type="ChEBI" id="CHEBI:15378"/>
        <dbReference type="ChEBI" id="CHEBI:57856"/>
        <dbReference type="ChEBI" id="CHEBI:58470"/>
        <dbReference type="ChEBI" id="CHEBI:59789"/>
        <dbReference type="ChEBI" id="CHEBI:192700"/>
    </reaction>
    <physiologicalReaction direction="left-to-right" evidence="6">
        <dbReference type="Rhea" id="RHEA:73072"/>
    </physiologicalReaction>
</comment>
<comment type="catalytic activity">
    <reaction evidence="3">
        <text>luteolin + S-adenosyl-L-methionine = luteolin 7-methyl ether + S-adenosyl-L-homocysteine + H(+)</text>
        <dbReference type="Rhea" id="RHEA:73075"/>
        <dbReference type="ChEBI" id="CHEBI:15378"/>
        <dbReference type="ChEBI" id="CHEBI:57545"/>
        <dbReference type="ChEBI" id="CHEBI:57856"/>
        <dbReference type="ChEBI" id="CHEBI:59789"/>
        <dbReference type="ChEBI" id="CHEBI:192705"/>
    </reaction>
    <physiologicalReaction direction="left-to-right" evidence="6">
        <dbReference type="Rhea" id="RHEA:73076"/>
    </physiologicalReaction>
</comment>
<comment type="catalytic activity">
    <reaction evidence="3">
        <text>quercetin + S-adenosyl-L-methionine = rhamnetin + S-adenosyl-L-homocysteine + H(+)</text>
        <dbReference type="Rhea" id="RHEA:73115"/>
        <dbReference type="ChEBI" id="CHEBI:15378"/>
        <dbReference type="ChEBI" id="CHEBI:57694"/>
        <dbReference type="ChEBI" id="CHEBI:57856"/>
        <dbReference type="ChEBI" id="CHEBI:59789"/>
        <dbReference type="ChEBI" id="CHEBI:192706"/>
    </reaction>
    <physiologicalReaction direction="left-to-right" evidence="6">
        <dbReference type="Rhea" id="RHEA:73116"/>
    </physiologicalReaction>
</comment>
<comment type="catalytic activity">
    <reaction evidence="3">
        <text>(2S)-naringenin + S-adenosyl-L-methionine = (2S)-sakuranetin + S-adenosyl-L-homocysteine + H(+)</text>
        <dbReference type="Rhea" id="RHEA:31539"/>
        <dbReference type="ChEBI" id="CHEBI:15378"/>
        <dbReference type="ChEBI" id="CHEBI:17846"/>
        <dbReference type="ChEBI" id="CHEBI:28927"/>
        <dbReference type="ChEBI" id="CHEBI:57856"/>
        <dbReference type="ChEBI" id="CHEBI:59789"/>
        <dbReference type="EC" id="2.1.1.232"/>
    </reaction>
    <physiologicalReaction direction="left-to-right" evidence="6">
        <dbReference type="Rhea" id="RHEA:31540"/>
    </physiologicalReaction>
</comment>
<comment type="catalytic activity">
    <reaction evidence="3">
        <text>kaempferol + S-adenosyl-L-methionine = kaempferol 7-methyl ether + S-adenosyl-L-homocysteine + H(+)</text>
        <dbReference type="Rhea" id="RHEA:73119"/>
        <dbReference type="ChEBI" id="CHEBI:15378"/>
        <dbReference type="ChEBI" id="CHEBI:57856"/>
        <dbReference type="ChEBI" id="CHEBI:58573"/>
        <dbReference type="ChEBI" id="CHEBI:59789"/>
        <dbReference type="ChEBI" id="CHEBI:192707"/>
    </reaction>
    <physiologicalReaction direction="left-to-right" evidence="6">
        <dbReference type="Rhea" id="RHEA:73120"/>
    </physiologicalReaction>
</comment>
<comment type="catalytic activity">
    <reaction evidence="3">
        <text>isorhamnetin + S-adenosyl-L-methionine = rhamnacene + S-adenosyl-L-homocysteine + H(+)</text>
        <dbReference type="Rhea" id="RHEA:73123"/>
        <dbReference type="ChEBI" id="CHEBI:15378"/>
        <dbReference type="ChEBI" id="CHEBI:57856"/>
        <dbReference type="ChEBI" id="CHEBI:59789"/>
        <dbReference type="ChEBI" id="CHEBI:144055"/>
        <dbReference type="ChEBI" id="CHEBI:192768"/>
    </reaction>
    <physiologicalReaction direction="left-to-right" evidence="6">
        <dbReference type="Rhea" id="RHEA:73124"/>
    </physiologicalReaction>
</comment>
<comment type="catalytic activity">
    <reaction evidence="3">
        <text>4',7,8-trihydroxyflavone + S-adenosyl-L-methionine = 4',8-dihydroxy-7-methoxyflavone + S-adenosyl-L-homocysteine</text>
        <dbReference type="Rhea" id="RHEA:73127"/>
        <dbReference type="ChEBI" id="CHEBI:57856"/>
        <dbReference type="ChEBI" id="CHEBI:59789"/>
        <dbReference type="ChEBI" id="CHEBI:192709"/>
        <dbReference type="ChEBI" id="CHEBI:192764"/>
    </reaction>
    <physiologicalReaction direction="left-to-right" evidence="6">
        <dbReference type="Rhea" id="RHEA:73128"/>
    </physiologicalReaction>
</comment>
<comment type="catalytic activity">
    <reaction evidence="3">
        <text>scutellarein + S-adenosyl-L-methionine = scutellarein 7-methyl ether + S-adenosyl-L-homocysteine</text>
        <dbReference type="Rhea" id="RHEA:73079"/>
        <dbReference type="ChEBI" id="CHEBI:57856"/>
        <dbReference type="ChEBI" id="CHEBI:59789"/>
        <dbReference type="ChEBI" id="CHEBI:78328"/>
        <dbReference type="ChEBI" id="CHEBI:192701"/>
    </reaction>
    <physiologicalReaction direction="left-to-right" evidence="6">
        <dbReference type="Rhea" id="RHEA:73080"/>
    </physiologicalReaction>
</comment>
<comment type="pathway">
    <text evidence="5">Flavonoid metabolism.</text>
</comment>
<comment type="subunit">
    <text evidence="1">Homodimer.</text>
</comment>
<comment type="similarity">
    <text evidence="2">Belongs to the class I-like SAM-binding methyltransferase superfamily. Cation-independent O-methyltransferase family.</text>
</comment>
<sequence>MAPEEDSLALAEAWNHGFGFIKTSIVKTAVELEIPDILESRGAPVSIPELATAVDCSADRIYRVMRFLAYHGIFKRTKPPPESTEGGSVYYAQTPVSRRLTRENLGPFVLLQGTMREPSGCVTAETLRTSKRPGVVNENESDHLYEDPVFSMKVFRDAMASHARMTTAAVIENYGEGFQGVGSLVDVGGSYGMALSMLVKAFPWLRGICFDLPEVVARASPLKGVEFVGGTMFESIPKADVVMLMFVLHNWSDEECVEILKRCKDAVSKDKGKVIIIDAVIDEDGDGDEFTGARLGLDVTMMATMFEGRERTYVEWARIINEAGFRRHVVKNIKTLESVIEAYP</sequence>